<keyword id="KW-0687">Ribonucleoprotein</keyword>
<keyword id="KW-0689">Ribosomal protein</keyword>
<comment type="similarity">
    <text evidence="1">Belongs to the eukaryotic ribosomal protein eS17 family.</text>
</comment>
<organism>
    <name type="scientific">Methanosarcina barkeri (strain Fusaro / DSM 804)</name>
    <dbReference type="NCBI Taxonomy" id="269797"/>
    <lineage>
        <taxon>Archaea</taxon>
        <taxon>Methanobacteriati</taxon>
        <taxon>Methanobacteriota</taxon>
        <taxon>Stenosarchaea group</taxon>
        <taxon>Methanomicrobia</taxon>
        <taxon>Methanosarcinales</taxon>
        <taxon>Methanosarcinaceae</taxon>
        <taxon>Methanosarcina</taxon>
    </lineage>
</organism>
<sequence>MGNIRQTNIKRIAFQLLENHRDVFTKDFETNKALVTKYTTIESKVIRNRVAGYVTRKVARMKVY</sequence>
<reference key="1">
    <citation type="journal article" date="2006" name="J. Bacteriol.">
        <title>The Methanosarcina barkeri genome: comparative analysis with Methanosarcina acetivorans and Methanosarcina mazei reveals extensive rearrangement within methanosarcinal genomes.</title>
        <authorList>
            <person name="Maeder D.L."/>
            <person name="Anderson I."/>
            <person name="Brettin T.S."/>
            <person name="Bruce D.C."/>
            <person name="Gilna P."/>
            <person name="Han C.S."/>
            <person name="Lapidus A."/>
            <person name="Metcalf W.W."/>
            <person name="Saunders E."/>
            <person name="Tapia R."/>
            <person name="Sowers K.R."/>
        </authorList>
    </citation>
    <scope>NUCLEOTIDE SEQUENCE [LARGE SCALE GENOMIC DNA]</scope>
    <source>
        <strain>Fusaro / DSM 804</strain>
    </source>
</reference>
<proteinExistence type="inferred from homology"/>
<feature type="chain" id="PRO_0000258601" description="Small ribosomal subunit protein eS17">
    <location>
        <begin position="1"/>
        <end position="64"/>
    </location>
</feature>
<dbReference type="EMBL" id="CP000099">
    <property type="protein sequence ID" value="AAZ70117.1"/>
    <property type="molecule type" value="Genomic_DNA"/>
</dbReference>
<dbReference type="SMR" id="Q46DC5"/>
<dbReference type="STRING" id="269797.Mbar_A1149"/>
<dbReference type="PaxDb" id="269797-Mbar_A1149"/>
<dbReference type="KEGG" id="mba:Mbar_A1149"/>
<dbReference type="eggNOG" id="arCOG01885">
    <property type="taxonomic scope" value="Archaea"/>
</dbReference>
<dbReference type="HOGENOM" id="CLU_176720_1_0_2"/>
<dbReference type="OrthoDB" id="52479at2157"/>
<dbReference type="GO" id="GO:0005829">
    <property type="term" value="C:cytosol"/>
    <property type="evidence" value="ECO:0007669"/>
    <property type="project" value="UniProtKB-ARBA"/>
</dbReference>
<dbReference type="GO" id="GO:1990904">
    <property type="term" value="C:ribonucleoprotein complex"/>
    <property type="evidence" value="ECO:0007669"/>
    <property type="project" value="UniProtKB-KW"/>
</dbReference>
<dbReference type="GO" id="GO:0005840">
    <property type="term" value="C:ribosome"/>
    <property type="evidence" value="ECO:0007669"/>
    <property type="project" value="UniProtKB-KW"/>
</dbReference>
<dbReference type="GO" id="GO:0003735">
    <property type="term" value="F:structural constituent of ribosome"/>
    <property type="evidence" value="ECO:0007669"/>
    <property type="project" value="InterPro"/>
</dbReference>
<dbReference type="GO" id="GO:0006412">
    <property type="term" value="P:translation"/>
    <property type="evidence" value="ECO:0007669"/>
    <property type="project" value="UniProtKB-UniRule"/>
</dbReference>
<dbReference type="Gene3D" id="1.10.60.20">
    <property type="entry name" value="Ribosomal protein S17e-like"/>
    <property type="match status" value="1"/>
</dbReference>
<dbReference type="HAMAP" id="MF_00511">
    <property type="entry name" value="Ribosomal_eS17"/>
    <property type="match status" value="1"/>
</dbReference>
<dbReference type="InterPro" id="IPR001210">
    <property type="entry name" value="Ribosomal_eS17"/>
</dbReference>
<dbReference type="InterPro" id="IPR018273">
    <property type="entry name" value="Ribosomal_eS17_CS"/>
</dbReference>
<dbReference type="InterPro" id="IPR036401">
    <property type="entry name" value="Ribosomal_eS17_sf"/>
</dbReference>
<dbReference type="NCBIfam" id="NF002242">
    <property type="entry name" value="PRK01151.1"/>
    <property type="match status" value="1"/>
</dbReference>
<dbReference type="PANTHER" id="PTHR10732">
    <property type="entry name" value="40S RIBOSOMAL PROTEIN S17"/>
    <property type="match status" value="1"/>
</dbReference>
<dbReference type="PANTHER" id="PTHR10732:SF0">
    <property type="entry name" value="40S RIBOSOMAL PROTEIN S17"/>
    <property type="match status" value="1"/>
</dbReference>
<dbReference type="Pfam" id="PF00833">
    <property type="entry name" value="Ribosomal_S17e"/>
    <property type="match status" value="1"/>
</dbReference>
<dbReference type="SUPFAM" id="SSF116820">
    <property type="entry name" value="Rps17e-like"/>
    <property type="match status" value="1"/>
</dbReference>
<dbReference type="PROSITE" id="PS00712">
    <property type="entry name" value="RIBOSOMAL_S17E"/>
    <property type="match status" value="1"/>
</dbReference>
<gene>
    <name evidence="1" type="primary">rps17e</name>
    <name type="ordered locus">Mbar_A1149</name>
</gene>
<accession>Q46DC5</accession>
<evidence type="ECO:0000255" key="1">
    <source>
        <dbReference type="HAMAP-Rule" id="MF_00511"/>
    </source>
</evidence>
<evidence type="ECO:0000305" key="2"/>
<protein>
    <recommendedName>
        <fullName evidence="1">Small ribosomal subunit protein eS17</fullName>
    </recommendedName>
    <alternativeName>
        <fullName evidence="2">30S ribosomal protein S17e</fullName>
    </alternativeName>
</protein>
<name>RS17E_METBF</name>